<evidence type="ECO:0000255" key="1">
    <source>
        <dbReference type="HAMAP-Rule" id="MF_00478"/>
    </source>
</evidence>
<accession>Q57020</accession>
<accession>P96346</accession>
<protein>
    <recommendedName>
        <fullName evidence="1">Ion-translocating oxidoreductase complex subunit E</fullName>
        <ecNumber evidence="1">7.-.-.-</ecNumber>
    </recommendedName>
    <alternativeName>
        <fullName evidence="1">Rnf electron transport complex subunit E</fullName>
    </alternativeName>
</protein>
<reference key="1">
    <citation type="journal article" date="1995" name="Science">
        <title>Whole-genome random sequencing and assembly of Haemophilus influenzae Rd.</title>
        <authorList>
            <person name="Fleischmann R.D."/>
            <person name="Adams M.D."/>
            <person name="White O."/>
            <person name="Clayton R.A."/>
            <person name="Kirkness E.F."/>
            <person name="Kerlavage A.R."/>
            <person name="Bult C.J."/>
            <person name="Tomb J.-F."/>
            <person name="Dougherty B.A."/>
            <person name="Merrick J.M."/>
            <person name="McKenney K."/>
            <person name="Sutton G.G."/>
            <person name="FitzHugh W."/>
            <person name="Fields C.A."/>
            <person name="Gocayne J.D."/>
            <person name="Scott J.D."/>
            <person name="Shirley R."/>
            <person name="Liu L.-I."/>
            <person name="Glodek A."/>
            <person name="Kelley J.M."/>
            <person name="Weidman J.F."/>
            <person name="Phillips C.A."/>
            <person name="Spriggs T."/>
            <person name="Hedblom E."/>
            <person name="Cotton M.D."/>
            <person name="Utterback T.R."/>
            <person name="Hanna M.C."/>
            <person name="Nguyen D.T."/>
            <person name="Saudek D.M."/>
            <person name="Brandon R.C."/>
            <person name="Fine L.D."/>
            <person name="Fritchman J.L."/>
            <person name="Fuhrmann J.L."/>
            <person name="Geoghagen N.S.M."/>
            <person name="Gnehm C.L."/>
            <person name="McDonald L.A."/>
            <person name="Small K.V."/>
            <person name="Fraser C.M."/>
            <person name="Smith H.O."/>
            <person name="Venter J.C."/>
        </authorList>
    </citation>
    <scope>NUCLEOTIDE SEQUENCE [LARGE SCALE GENOMIC DNA]</scope>
    <source>
        <strain>ATCC 51907 / DSM 11121 / KW20 / Rd</strain>
    </source>
</reference>
<dbReference type="EC" id="7.-.-.-" evidence="1"/>
<dbReference type="EMBL" id="L42023">
    <property type="protein sequence ID" value="AAC23334.1"/>
    <property type="molecule type" value="Genomic_DNA"/>
</dbReference>
<dbReference type="PIR" id="I64174">
    <property type="entry name" value="I64174"/>
</dbReference>
<dbReference type="RefSeq" id="NP_439830.1">
    <property type="nucleotide sequence ID" value="NC_000907.1"/>
</dbReference>
<dbReference type="SMR" id="Q57020"/>
<dbReference type="STRING" id="71421.HI_1688"/>
<dbReference type="EnsemblBacteria" id="AAC23334">
    <property type="protein sequence ID" value="AAC23334"/>
    <property type="gene ID" value="HI_1688"/>
</dbReference>
<dbReference type="KEGG" id="hin:HI_1688"/>
<dbReference type="PATRIC" id="fig|71421.8.peg.1767"/>
<dbReference type="eggNOG" id="COG4660">
    <property type="taxonomic scope" value="Bacteria"/>
</dbReference>
<dbReference type="HOGENOM" id="CLU_046659_1_0_6"/>
<dbReference type="OrthoDB" id="9782945at2"/>
<dbReference type="PhylomeDB" id="Q57020"/>
<dbReference type="BioCyc" id="HINF71421:G1GJ1-1704-MONOMER"/>
<dbReference type="Proteomes" id="UP000000579">
    <property type="component" value="Chromosome"/>
</dbReference>
<dbReference type="GO" id="GO:0005886">
    <property type="term" value="C:plasma membrane"/>
    <property type="evidence" value="ECO:0000318"/>
    <property type="project" value="GO_Central"/>
</dbReference>
<dbReference type="GO" id="GO:0022900">
    <property type="term" value="P:electron transport chain"/>
    <property type="evidence" value="ECO:0007669"/>
    <property type="project" value="UniProtKB-UniRule"/>
</dbReference>
<dbReference type="HAMAP" id="MF_00478">
    <property type="entry name" value="RsxE_RnfE"/>
    <property type="match status" value="1"/>
</dbReference>
<dbReference type="InterPro" id="IPR003667">
    <property type="entry name" value="NqrDE/RnfAE"/>
</dbReference>
<dbReference type="InterPro" id="IPR010968">
    <property type="entry name" value="RnfE"/>
</dbReference>
<dbReference type="NCBIfam" id="NF009070">
    <property type="entry name" value="PRK12405.1"/>
    <property type="match status" value="1"/>
</dbReference>
<dbReference type="NCBIfam" id="TIGR01948">
    <property type="entry name" value="rnfE"/>
    <property type="match status" value="1"/>
</dbReference>
<dbReference type="PANTHER" id="PTHR30586">
    <property type="entry name" value="ELECTRON TRANSPORT COMPLEX PROTEIN RNFE"/>
    <property type="match status" value="1"/>
</dbReference>
<dbReference type="PANTHER" id="PTHR30586:SF0">
    <property type="entry name" value="ION-TRANSLOCATING OXIDOREDUCTASE COMPLEX SUBUNIT E"/>
    <property type="match status" value="1"/>
</dbReference>
<dbReference type="Pfam" id="PF02508">
    <property type="entry name" value="Rnf-Nqr"/>
    <property type="match status" value="1"/>
</dbReference>
<dbReference type="PIRSF" id="PIRSF006102">
    <property type="entry name" value="NQR_DE"/>
    <property type="match status" value="1"/>
</dbReference>
<keyword id="KW-0997">Cell inner membrane</keyword>
<keyword id="KW-1003">Cell membrane</keyword>
<keyword id="KW-0249">Electron transport</keyword>
<keyword id="KW-0472">Membrane</keyword>
<keyword id="KW-1185">Reference proteome</keyword>
<keyword id="KW-1278">Translocase</keyword>
<keyword id="KW-0812">Transmembrane</keyword>
<keyword id="KW-1133">Transmembrane helix</keyword>
<keyword id="KW-0813">Transport</keyword>
<sequence length="235" mass="25845">MTDLTEKNTALEEEKIESAVENQQKSIWKEIFAQGIWKNNPAVVQLLGLCPLLAVSSTATNALGLGLATMLVLTCTNTVISLFRQYIPKEIRIPIYVMIIATTVTAVQLLMNAYTYTLYQSLGIFIPLIVTNCIIIGRAEAFASKNSLLHSIWDGFSMGLGMALSLTILGALREIIGQGTIFEGIENLFGEQAKFLTHHIYHTDSSFLLFILPPGAFIGLGLLLAIKNRIDNIKK</sequence>
<feature type="chain" id="PRO_0000214273" description="Ion-translocating oxidoreductase complex subunit E">
    <location>
        <begin position="1"/>
        <end position="235"/>
    </location>
</feature>
<feature type="transmembrane region" description="Helical" evidence="1">
    <location>
        <begin position="63"/>
        <end position="83"/>
    </location>
</feature>
<feature type="transmembrane region" description="Helical" evidence="1">
    <location>
        <begin position="93"/>
        <end position="113"/>
    </location>
</feature>
<feature type="transmembrane region" description="Helical" evidence="1">
    <location>
        <begin position="117"/>
        <end position="137"/>
    </location>
</feature>
<feature type="transmembrane region" description="Helical" evidence="1">
    <location>
        <begin position="152"/>
        <end position="172"/>
    </location>
</feature>
<feature type="transmembrane region" description="Helical" evidence="1">
    <location>
        <begin position="206"/>
        <end position="226"/>
    </location>
</feature>
<name>RNFE_HAEIN</name>
<gene>
    <name evidence="1" type="primary">rnfE</name>
    <name type="ordered locus">HI_1688</name>
</gene>
<comment type="function">
    <text evidence="1">Part of a membrane-bound complex that couples electron transfer with translocation of ions across the membrane.</text>
</comment>
<comment type="subunit">
    <text evidence="1">The complex is composed of six subunits: RnfA, RnfB, RnfC, RnfD, RnfE and RnfG.</text>
</comment>
<comment type="subcellular location">
    <subcellularLocation>
        <location evidence="1">Cell inner membrane</location>
        <topology evidence="1">Multi-pass membrane protein</topology>
    </subcellularLocation>
</comment>
<comment type="similarity">
    <text evidence="1">Belongs to the NqrDE/RnfAE family.</text>
</comment>
<proteinExistence type="inferred from homology"/>
<organism>
    <name type="scientific">Haemophilus influenzae (strain ATCC 51907 / DSM 11121 / KW20 / Rd)</name>
    <dbReference type="NCBI Taxonomy" id="71421"/>
    <lineage>
        <taxon>Bacteria</taxon>
        <taxon>Pseudomonadati</taxon>
        <taxon>Pseudomonadota</taxon>
        <taxon>Gammaproteobacteria</taxon>
        <taxon>Pasteurellales</taxon>
        <taxon>Pasteurellaceae</taxon>
        <taxon>Haemophilus</taxon>
    </lineage>
</organism>